<proteinExistence type="inferred from homology"/>
<organism>
    <name type="scientific">Prochlorococcus marinus (strain NATL1A)</name>
    <dbReference type="NCBI Taxonomy" id="167555"/>
    <lineage>
        <taxon>Bacteria</taxon>
        <taxon>Bacillati</taxon>
        <taxon>Cyanobacteriota</taxon>
        <taxon>Cyanophyceae</taxon>
        <taxon>Synechococcales</taxon>
        <taxon>Prochlorococcaceae</taxon>
        <taxon>Prochlorococcus</taxon>
    </lineage>
</organism>
<sequence>MISWLKGEKVHTWKISSRKGVVLNVGGVGYEIQLLPKQIDKAEVLNEFELWIHQIDREDGTSLYGFIEVNQRDLFREIISVNGIGPQIGMAMLEEFEVPQLVNAIENKESNLLTKTQGIGKRIAERLIVELRNKLQRFTDNDKTIHENKKGIEANQFSKYIDEIYLILNSLGYVDNEIKESIKIITINEKENSLLLNSSSAEEKAELMDKHLKEILMKLSEKTT</sequence>
<evidence type="ECO:0000255" key="1">
    <source>
        <dbReference type="HAMAP-Rule" id="MF_00031"/>
    </source>
</evidence>
<dbReference type="EMBL" id="CP000553">
    <property type="protein sequence ID" value="ABM75495.1"/>
    <property type="molecule type" value="Genomic_DNA"/>
</dbReference>
<dbReference type="RefSeq" id="WP_011823630.1">
    <property type="nucleotide sequence ID" value="NC_008819.1"/>
</dbReference>
<dbReference type="SMR" id="A2C1Y5"/>
<dbReference type="KEGG" id="pme:NATL1_09371"/>
<dbReference type="eggNOG" id="COG0632">
    <property type="taxonomic scope" value="Bacteria"/>
</dbReference>
<dbReference type="HOGENOM" id="CLU_087936_0_0_3"/>
<dbReference type="Proteomes" id="UP000002592">
    <property type="component" value="Chromosome"/>
</dbReference>
<dbReference type="GO" id="GO:0005737">
    <property type="term" value="C:cytoplasm"/>
    <property type="evidence" value="ECO:0007669"/>
    <property type="project" value="UniProtKB-SubCell"/>
</dbReference>
<dbReference type="GO" id="GO:0048476">
    <property type="term" value="C:Holliday junction resolvase complex"/>
    <property type="evidence" value="ECO:0007669"/>
    <property type="project" value="UniProtKB-UniRule"/>
</dbReference>
<dbReference type="GO" id="GO:0005524">
    <property type="term" value="F:ATP binding"/>
    <property type="evidence" value="ECO:0007669"/>
    <property type="project" value="InterPro"/>
</dbReference>
<dbReference type="GO" id="GO:0000400">
    <property type="term" value="F:four-way junction DNA binding"/>
    <property type="evidence" value="ECO:0007669"/>
    <property type="project" value="UniProtKB-UniRule"/>
</dbReference>
<dbReference type="GO" id="GO:0009378">
    <property type="term" value="F:four-way junction helicase activity"/>
    <property type="evidence" value="ECO:0007669"/>
    <property type="project" value="InterPro"/>
</dbReference>
<dbReference type="GO" id="GO:0006310">
    <property type="term" value="P:DNA recombination"/>
    <property type="evidence" value="ECO:0007669"/>
    <property type="project" value="UniProtKB-UniRule"/>
</dbReference>
<dbReference type="GO" id="GO:0006281">
    <property type="term" value="P:DNA repair"/>
    <property type="evidence" value="ECO:0007669"/>
    <property type="project" value="UniProtKB-UniRule"/>
</dbReference>
<dbReference type="Gene3D" id="1.10.150.20">
    <property type="entry name" value="5' to 3' exonuclease, C-terminal subdomain"/>
    <property type="match status" value="1"/>
</dbReference>
<dbReference type="Gene3D" id="2.40.50.140">
    <property type="entry name" value="Nucleic acid-binding proteins"/>
    <property type="match status" value="1"/>
</dbReference>
<dbReference type="HAMAP" id="MF_00031">
    <property type="entry name" value="DNA_HJ_migration_RuvA"/>
    <property type="match status" value="1"/>
</dbReference>
<dbReference type="InterPro" id="IPR013849">
    <property type="entry name" value="DNA_helicase_Holl-junc_RuvA_I"/>
</dbReference>
<dbReference type="InterPro" id="IPR003583">
    <property type="entry name" value="Hlx-hairpin-Hlx_DNA-bd_motif"/>
</dbReference>
<dbReference type="InterPro" id="IPR012340">
    <property type="entry name" value="NA-bd_OB-fold"/>
</dbReference>
<dbReference type="InterPro" id="IPR000085">
    <property type="entry name" value="RuvA"/>
</dbReference>
<dbReference type="InterPro" id="IPR010994">
    <property type="entry name" value="RuvA_2-like"/>
</dbReference>
<dbReference type="NCBIfam" id="TIGR00084">
    <property type="entry name" value="ruvA"/>
    <property type="match status" value="1"/>
</dbReference>
<dbReference type="Pfam" id="PF14520">
    <property type="entry name" value="HHH_5"/>
    <property type="match status" value="1"/>
</dbReference>
<dbReference type="Pfam" id="PF01330">
    <property type="entry name" value="RuvA_N"/>
    <property type="match status" value="1"/>
</dbReference>
<dbReference type="SMART" id="SM00278">
    <property type="entry name" value="HhH1"/>
    <property type="match status" value="2"/>
</dbReference>
<dbReference type="SUPFAM" id="SSF50249">
    <property type="entry name" value="Nucleic acid-binding proteins"/>
    <property type="match status" value="1"/>
</dbReference>
<dbReference type="SUPFAM" id="SSF47781">
    <property type="entry name" value="RuvA domain 2-like"/>
    <property type="match status" value="1"/>
</dbReference>
<comment type="function">
    <text evidence="1">The RuvA-RuvB-RuvC complex processes Holliday junction (HJ) DNA during genetic recombination and DNA repair, while the RuvA-RuvB complex plays an important role in the rescue of blocked DNA replication forks via replication fork reversal (RFR). RuvA specifically binds to HJ cruciform DNA, conferring on it an open structure. The RuvB hexamer acts as an ATP-dependent pump, pulling dsDNA into and through the RuvAB complex. HJ branch migration allows RuvC to scan DNA until it finds its consensus sequence, where it cleaves and resolves the cruciform DNA.</text>
</comment>
<comment type="subunit">
    <text evidence="1">Homotetramer. Forms an RuvA(8)-RuvB(12)-Holliday junction (HJ) complex. HJ DNA is sandwiched between 2 RuvA tetramers; dsDNA enters through RuvA and exits via RuvB. An RuvB hexamer assembles on each DNA strand where it exits the tetramer. Each RuvB hexamer is contacted by two RuvA subunits (via domain III) on 2 adjacent RuvB subunits; this complex drives branch migration. In the full resolvosome a probable DNA-RuvA(4)-RuvB(12)-RuvC(2) complex forms which resolves the HJ.</text>
</comment>
<comment type="subcellular location">
    <subcellularLocation>
        <location evidence="1">Cytoplasm</location>
    </subcellularLocation>
</comment>
<comment type="domain">
    <text evidence="1">Has three domains with a flexible linker between the domains II and III and assumes an 'L' shape. Domain III is highly mobile and contacts RuvB.</text>
</comment>
<comment type="similarity">
    <text evidence="1">Belongs to the RuvA family.</text>
</comment>
<feature type="chain" id="PRO_1000002513" description="Holliday junction branch migration complex subunit RuvA">
    <location>
        <begin position="1"/>
        <end position="224"/>
    </location>
</feature>
<feature type="region of interest" description="Domain I" evidence="1">
    <location>
        <begin position="1"/>
        <end position="67"/>
    </location>
</feature>
<feature type="region of interest" description="Domain II" evidence="1">
    <location>
        <begin position="68"/>
        <end position="146"/>
    </location>
</feature>
<feature type="region of interest" description="Flexible linker" evidence="1">
    <location>
        <begin position="147"/>
        <end position="155"/>
    </location>
</feature>
<feature type="region of interest" description="Domain III" evidence="1">
    <location>
        <begin position="156"/>
        <end position="224"/>
    </location>
</feature>
<accession>A2C1Y5</accession>
<reference key="1">
    <citation type="journal article" date="2007" name="PLoS Genet.">
        <title>Patterns and implications of gene gain and loss in the evolution of Prochlorococcus.</title>
        <authorList>
            <person name="Kettler G.C."/>
            <person name="Martiny A.C."/>
            <person name="Huang K."/>
            <person name="Zucker J."/>
            <person name="Coleman M.L."/>
            <person name="Rodrigue S."/>
            <person name="Chen F."/>
            <person name="Lapidus A."/>
            <person name="Ferriera S."/>
            <person name="Johnson J."/>
            <person name="Steglich C."/>
            <person name="Church G.M."/>
            <person name="Richardson P."/>
            <person name="Chisholm S.W."/>
        </authorList>
    </citation>
    <scope>NUCLEOTIDE SEQUENCE [LARGE SCALE GENOMIC DNA]</scope>
    <source>
        <strain>NATL1A</strain>
    </source>
</reference>
<keyword id="KW-0963">Cytoplasm</keyword>
<keyword id="KW-0227">DNA damage</keyword>
<keyword id="KW-0233">DNA recombination</keyword>
<keyword id="KW-0234">DNA repair</keyword>
<keyword id="KW-0238">DNA-binding</keyword>
<protein>
    <recommendedName>
        <fullName evidence="1">Holliday junction branch migration complex subunit RuvA</fullName>
    </recommendedName>
</protein>
<name>RUVA_PROM1</name>
<gene>
    <name evidence="1" type="primary">ruvA</name>
    <name type="ordered locus">NATL1_09371</name>
</gene>